<protein>
    <recommendedName>
        <fullName>Diacetyl reductase [(S)-acetoin forming]</fullName>
        <ecNumber>1.1.1.304</ecNumber>
    </recommendedName>
    <alternativeName>
        <fullName>Acetoin(diacetyl) reductase</fullName>
        <shortName>AR</shortName>
    </alternativeName>
    <alternativeName>
        <fullName>Meso-2,3-butanediol dehydrogenase</fullName>
    </alternativeName>
</protein>
<sequence length="257" mass="27917">MSKTAIITGSAGGLGKGIAERLANDGFNIVLQDINEALLLETEKEFKEKGYQAVAFKSDVSKKKEQEELVQFAVTEFGQLDVMVNNAGVDAVTPILEIGEEELSKLFNINVFGTLFGIQAAANQFIKQKSKGKIINACSIAGHESYEVLGTYSATKHSVRSFTQTAAKELADKGITVNAYCPGVAKTEMWDRIDEEMVKLDDSLEIGDAFEAFSSEIKLGRYQEPSDVANLVSFLASNDSDYITGQSILTDGGLVYR</sequence>
<evidence type="ECO:0000250" key="1"/>
<evidence type="ECO:0000255" key="2">
    <source>
        <dbReference type="PROSITE-ProRule" id="PRU10001"/>
    </source>
</evidence>
<evidence type="ECO:0000305" key="3"/>
<organism>
    <name type="scientific">Staphylococcus epidermidis (strain ATCC 35984 / DSM 28319 / BCRC 17069 / CCUG 31568 / BM 3577 / RP62A)</name>
    <dbReference type="NCBI Taxonomy" id="176279"/>
    <lineage>
        <taxon>Bacteria</taxon>
        <taxon>Bacillati</taxon>
        <taxon>Bacillota</taxon>
        <taxon>Bacilli</taxon>
        <taxon>Bacillales</taxon>
        <taxon>Staphylococcaceae</taxon>
        <taxon>Staphylococcus</taxon>
    </lineage>
</organism>
<reference key="1">
    <citation type="journal article" date="2005" name="J. Bacteriol.">
        <title>Insights on evolution of virulence and resistance from the complete genome analysis of an early methicillin-resistant Staphylococcus aureus strain and a biofilm-producing methicillin-resistant Staphylococcus epidermidis strain.</title>
        <authorList>
            <person name="Gill S.R."/>
            <person name="Fouts D.E."/>
            <person name="Archer G.L."/>
            <person name="Mongodin E.F."/>
            <person name="DeBoy R.T."/>
            <person name="Ravel J."/>
            <person name="Paulsen I.T."/>
            <person name="Kolonay J.F."/>
            <person name="Brinkac L.M."/>
            <person name="Beanan M.J."/>
            <person name="Dodson R.J."/>
            <person name="Daugherty S.C."/>
            <person name="Madupu R."/>
            <person name="Angiuoli S.V."/>
            <person name="Durkin A.S."/>
            <person name="Haft D.H."/>
            <person name="Vamathevan J.J."/>
            <person name="Khouri H."/>
            <person name="Utterback T.R."/>
            <person name="Lee C."/>
            <person name="Dimitrov G."/>
            <person name="Jiang L."/>
            <person name="Qin H."/>
            <person name="Weidman J."/>
            <person name="Tran K."/>
            <person name="Kang K.H."/>
            <person name="Hance I.R."/>
            <person name="Nelson K.E."/>
            <person name="Fraser C.M."/>
        </authorList>
    </citation>
    <scope>NUCLEOTIDE SEQUENCE [LARGE SCALE GENOMIC DNA]</scope>
    <source>
        <strain>ATCC 35984 / DSM 28319 / BCRC 17069 / CCUG 31568 / BM 3577 / RP62A</strain>
    </source>
</reference>
<name>BUTA_STAEQ</name>
<accession>Q5HKG6</accession>
<comment type="function">
    <text evidence="1">Catalyzes the irreversible reduction of 2,3-butanediol to (S)-acetoin in the presence of NADH.</text>
</comment>
<comment type="catalytic activity">
    <reaction>
        <text>(S)-acetoin + NAD(+) = diacetyl + NADH + H(+)</text>
        <dbReference type="Rhea" id="RHEA:27286"/>
        <dbReference type="ChEBI" id="CHEBI:15378"/>
        <dbReference type="ChEBI" id="CHEBI:15687"/>
        <dbReference type="ChEBI" id="CHEBI:16583"/>
        <dbReference type="ChEBI" id="CHEBI:57540"/>
        <dbReference type="ChEBI" id="CHEBI:57945"/>
        <dbReference type="EC" id="1.1.1.304"/>
    </reaction>
</comment>
<comment type="similarity">
    <text evidence="3">Belongs to the short-chain dehydrogenases/reductases (SDR) family.</text>
</comment>
<keyword id="KW-0520">NAD</keyword>
<keyword id="KW-0560">Oxidoreductase</keyword>
<keyword id="KW-1185">Reference proteome</keyword>
<feature type="chain" id="PRO_0000054546" description="Diacetyl reductase [(S)-acetoin forming]">
    <location>
        <begin position="1"/>
        <end position="257"/>
    </location>
</feature>
<feature type="active site" description="Proton acceptor" evidence="2">
    <location>
        <position position="152"/>
    </location>
</feature>
<feature type="active site" evidence="1">
    <location>
        <position position="156"/>
    </location>
</feature>
<feature type="binding site" evidence="1">
    <location>
        <begin position="6"/>
        <end position="30"/>
    </location>
    <ligand>
        <name>NAD(+)</name>
        <dbReference type="ChEBI" id="CHEBI:57540"/>
    </ligand>
</feature>
<feature type="binding site" evidence="1">
    <location>
        <position position="139"/>
    </location>
    <ligand>
        <name>substrate</name>
    </ligand>
</feature>
<gene>
    <name type="primary">butA</name>
    <name type="ordered locus">SERP2379</name>
</gene>
<dbReference type="EC" id="1.1.1.304"/>
<dbReference type="EMBL" id="CP000029">
    <property type="protein sequence ID" value="AAW53206.1"/>
    <property type="molecule type" value="Genomic_DNA"/>
</dbReference>
<dbReference type="RefSeq" id="WP_002484659.1">
    <property type="nucleotide sequence ID" value="NC_002976.3"/>
</dbReference>
<dbReference type="SMR" id="Q5HKG6"/>
<dbReference type="STRING" id="176279.SERP2379"/>
<dbReference type="KEGG" id="ser:SERP2379"/>
<dbReference type="eggNOG" id="COG1028">
    <property type="taxonomic scope" value="Bacteria"/>
</dbReference>
<dbReference type="HOGENOM" id="CLU_010194_1_0_9"/>
<dbReference type="Proteomes" id="UP000000531">
    <property type="component" value="Chromosome"/>
</dbReference>
<dbReference type="GO" id="GO:0052588">
    <property type="term" value="F:diacetyl reductase ((S)-acetoin forming) (NAD+) activity"/>
    <property type="evidence" value="ECO:0007669"/>
    <property type="project" value="UniProtKB-EC"/>
</dbReference>
<dbReference type="GO" id="GO:0048038">
    <property type="term" value="F:quinone binding"/>
    <property type="evidence" value="ECO:0007669"/>
    <property type="project" value="TreeGrafter"/>
</dbReference>
<dbReference type="GO" id="GO:0045150">
    <property type="term" value="P:acetoin catabolic process"/>
    <property type="evidence" value="ECO:0007669"/>
    <property type="project" value="InterPro"/>
</dbReference>
<dbReference type="GO" id="GO:0006633">
    <property type="term" value="P:fatty acid biosynthetic process"/>
    <property type="evidence" value="ECO:0007669"/>
    <property type="project" value="TreeGrafter"/>
</dbReference>
<dbReference type="CDD" id="cd05366">
    <property type="entry name" value="meso-BDH-like_SDR_c"/>
    <property type="match status" value="1"/>
</dbReference>
<dbReference type="FunFam" id="3.40.50.720:FF:000084">
    <property type="entry name" value="Short-chain dehydrogenase reductase"/>
    <property type="match status" value="1"/>
</dbReference>
<dbReference type="Gene3D" id="3.40.50.720">
    <property type="entry name" value="NAD(P)-binding Rossmann-like Domain"/>
    <property type="match status" value="1"/>
</dbReference>
<dbReference type="InterPro" id="IPR014007">
    <property type="entry name" value="23BDH"/>
</dbReference>
<dbReference type="InterPro" id="IPR036291">
    <property type="entry name" value="NAD(P)-bd_dom_sf"/>
</dbReference>
<dbReference type="InterPro" id="IPR020904">
    <property type="entry name" value="Sc_DH/Rdtase_CS"/>
</dbReference>
<dbReference type="InterPro" id="IPR002347">
    <property type="entry name" value="SDR_fam"/>
</dbReference>
<dbReference type="NCBIfam" id="TIGR02415">
    <property type="entry name" value="23BDH"/>
    <property type="match status" value="1"/>
</dbReference>
<dbReference type="NCBIfam" id="NF005559">
    <property type="entry name" value="PRK07231.1"/>
    <property type="match status" value="1"/>
</dbReference>
<dbReference type="PANTHER" id="PTHR42760:SF121">
    <property type="entry name" value="3-OXOACYL-(ACYL-CARRIER-PROTEIN) REDUCTASE"/>
    <property type="match status" value="1"/>
</dbReference>
<dbReference type="PANTHER" id="PTHR42760">
    <property type="entry name" value="SHORT-CHAIN DEHYDROGENASES/REDUCTASES FAMILY MEMBER"/>
    <property type="match status" value="1"/>
</dbReference>
<dbReference type="Pfam" id="PF00106">
    <property type="entry name" value="adh_short"/>
    <property type="match status" value="1"/>
</dbReference>
<dbReference type="PRINTS" id="PR00081">
    <property type="entry name" value="GDHRDH"/>
</dbReference>
<dbReference type="PRINTS" id="PR00080">
    <property type="entry name" value="SDRFAMILY"/>
</dbReference>
<dbReference type="SUPFAM" id="SSF51735">
    <property type="entry name" value="NAD(P)-binding Rossmann-fold domains"/>
    <property type="match status" value="1"/>
</dbReference>
<dbReference type="PROSITE" id="PS00061">
    <property type="entry name" value="ADH_SHORT"/>
    <property type="match status" value="1"/>
</dbReference>
<proteinExistence type="inferred from homology"/>